<sequence length="345" mass="37974">MEKIKVIVVDDSVLMRRLICDMLESNDNIEVIGTAINGQDLLNKLKVMKPDVITLDIEMPVMNGIETLKAVKSLKIDIPIIVFSSISQKGMKYTMECLYLGAFDFIPKPEKPFELSKMKDDLIKRIRVAYSQNTNKNPAPINPVIRRETNRISSDSIEAVVIGASTGGPKALYKVITKFPKDMNVPVFVVQHMPVGFTKAFADRLNDNSAIEVKEATDGETYRKGVVYVAPGGYHMEVDSNSRIKLTKEPPIWGVRPAVDKLFISASKIFKSHIVSAVLTGMGKDGSNGTGIIKDNGGVTISESETTCVIYGMPKAAFETGKVDLVVPIDNVADEIIKIVRGLRR</sequence>
<accession>Q97GZ3</accession>
<dbReference type="EC" id="3.1.1.61" evidence="1"/>
<dbReference type="EC" id="3.5.1.44" evidence="1"/>
<dbReference type="EMBL" id="AE001437">
    <property type="protein sequence ID" value="AAK80179.1"/>
    <property type="molecule type" value="Genomic_DNA"/>
</dbReference>
<dbReference type="PIR" id="H97173">
    <property type="entry name" value="H97173"/>
</dbReference>
<dbReference type="RefSeq" id="NP_348839.1">
    <property type="nucleotide sequence ID" value="NC_003030.1"/>
</dbReference>
<dbReference type="RefSeq" id="WP_010965520.1">
    <property type="nucleotide sequence ID" value="NC_003030.1"/>
</dbReference>
<dbReference type="SMR" id="Q97GZ3"/>
<dbReference type="STRING" id="272562.CA_C2222"/>
<dbReference type="KEGG" id="cac:CA_C2222"/>
<dbReference type="PATRIC" id="fig|272562.8.peg.2423"/>
<dbReference type="eggNOG" id="COG2201">
    <property type="taxonomic scope" value="Bacteria"/>
</dbReference>
<dbReference type="HOGENOM" id="CLU_000445_51_0_9"/>
<dbReference type="OrthoDB" id="9793421at2"/>
<dbReference type="Proteomes" id="UP000000814">
    <property type="component" value="Chromosome"/>
</dbReference>
<dbReference type="GO" id="GO:0005737">
    <property type="term" value="C:cytoplasm"/>
    <property type="evidence" value="ECO:0007669"/>
    <property type="project" value="UniProtKB-SubCell"/>
</dbReference>
<dbReference type="GO" id="GO:0000156">
    <property type="term" value="F:phosphorelay response regulator activity"/>
    <property type="evidence" value="ECO:0007669"/>
    <property type="project" value="InterPro"/>
</dbReference>
<dbReference type="GO" id="GO:0008984">
    <property type="term" value="F:protein-glutamate methylesterase activity"/>
    <property type="evidence" value="ECO:0007669"/>
    <property type="project" value="UniProtKB-UniRule"/>
</dbReference>
<dbReference type="GO" id="GO:0050568">
    <property type="term" value="F:protein-glutamine glutaminase activity"/>
    <property type="evidence" value="ECO:0007669"/>
    <property type="project" value="UniProtKB-UniRule"/>
</dbReference>
<dbReference type="GO" id="GO:0006935">
    <property type="term" value="P:chemotaxis"/>
    <property type="evidence" value="ECO:0007669"/>
    <property type="project" value="UniProtKB-UniRule"/>
</dbReference>
<dbReference type="CDD" id="cd16432">
    <property type="entry name" value="CheB_Rec"/>
    <property type="match status" value="1"/>
</dbReference>
<dbReference type="CDD" id="cd17541">
    <property type="entry name" value="REC_CheB-like"/>
    <property type="match status" value="1"/>
</dbReference>
<dbReference type="Gene3D" id="3.40.50.2300">
    <property type="match status" value="1"/>
</dbReference>
<dbReference type="Gene3D" id="3.40.50.180">
    <property type="entry name" value="Methylesterase CheB, C-terminal domain"/>
    <property type="match status" value="1"/>
</dbReference>
<dbReference type="HAMAP" id="MF_00099">
    <property type="entry name" value="CheB_chemtxs"/>
    <property type="match status" value="1"/>
</dbReference>
<dbReference type="InterPro" id="IPR008248">
    <property type="entry name" value="CheB-like"/>
</dbReference>
<dbReference type="InterPro" id="IPR035909">
    <property type="entry name" value="CheB_C"/>
</dbReference>
<dbReference type="InterPro" id="IPR011006">
    <property type="entry name" value="CheY-like_superfamily"/>
</dbReference>
<dbReference type="InterPro" id="IPR000673">
    <property type="entry name" value="Sig_transdc_resp-reg_Me-estase"/>
</dbReference>
<dbReference type="InterPro" id="IPR001789">
    <property type="entry name" value="Sig_transdc_resp-reg_receiver"/>
</dbReference>
<dbReference type="NCBIfam" id="NF001965">
    <property type="entry name" value="PRK00742.1"/>
    <property type="match status" value="1"/>
</dbReference>
<dbReference type="PANTHER" id="PTHR42872">
    <property type="entry name" value="PROTEIN-GLUTAMATE METHYLESTERASE/PROTEIN-GLUTAMINE GLUTAMINASE"/>
    <property type="match status" value="1"/>
</dbReference>
<dbReference type="PANTHER" id="PTHR42872:SF6">
    <property type="entry name" value="PROTEIN-GLUTAMATE METHYLESTERASE_PROTEIN-GLUTAMINE GLUTAMINASE"/>
    <property type="match status" value="1"/>
</dbReference>
<dbReference type="Pfam" id="PF01339">
    <property type="entry name" value="CheB_methylest"/>
    <property type="match status" value="1"/>
</dbReference>
<dbReference type="Pfam" id="PF00072">
    <property type="entry name" value="Response_reg"/>
    <property type="match status" value="1"/>
</dbReference>
<dbReference type="PIRSF" id="PIRSF000876">
    <property type="entry name" value="RR_chemtxs_CheB"/>
    <property type="match status" value="1"/>
</dbReference>
<dbReference type="SMART" id="SM00448">
    <property type="entry name" value="REC"/>
    <property type="match status" value="1"/>
</dbReference>
<dbReference type="SUPFAM" id="SSF52172">
    <property type="entry name" value="CheY-like"/>
    <property type="match status" value="1"/>
</dbReference>
<dbReference type="SUPFAM" id="SSF52738">
    <property type="entry name" value="Methylesterase CheB, C-terminal domain"/>
    <property type="match status" value="1"/>
</dbReference>
<dbReference type="PROSITE" id="PS50122">
    <property type="entry name" value="CHEB"/>
    <property type="match status" value="1"/>
</dbReference>
<dbReference type="PROSITE" id="PS50110">
    <property type="entry name" value="RESPONSE_REGULATORY"/>
    <property type="match status" value="1"/>
</dbReference>
<reference key="1">
    <citation type="journal article" date="2001" name="J. Bacteriol.">
        <title>Genome sequence and comparative analysis of the solvent-producing bacterium Clostridium acetobutylicum.</title>
        <authorList>
            <person name="Noelling J."/>
            <person name="Breton G."/>
            <person name="Omelchenko M.V."/>
            <person name="Makarova K.S."/>
            <person name="Zeng Q."/>
            <person name="Gibson R."/>
            <person name="Lee H.M."/>
            <person name="Dubois J."/>
            <person name="Qiu D."/>
            <person name="Hitti J."/>
            <person name="Wolf Y.I."/>
            <person name="Tatusov R.L."/>
            <person name="Sabathe F."/>
            <person name="Doucette-Stamm L.A."/>
            <person name="Soucaille P."/>
            <person name="Daly M.J."/>
            <person name="Bennett G.N."/>
            <person name="Koonin E.V."/>
            <person name="Smith D.R."/>
        </authorList>
    </citation>
    <scope>NUCLEOTIDE SEQUENCE [LARGE SCALE GENOMIC DNA]</scope>
    <source>
        <strain>ATCC 824 / DSM 792 / JCM 1419 / IAM 19013 / LMG 5710 / NBRC 13948 / NRRL B-527 / VKM B-1787 / 2291 / W</strain>
    </source>
</reference>
<evidence type="ECO:0000255" key="1">
    <source>
        <dbReference type="HAMAP-Rule" id="MF_00099"/>
    </source>
</evidence>
<protein>
    <recommendedName>
        <fullName evidence="1">Protein-glutamate methylesterase/protein-glutamine glutaminase</fullName>
        <ecNumber evidence="1">3.1.1.61</ecNumber>
        <ecNumber evidence="1">3.5.1.44</ecNumber>
    </recommendedName>
</protein>
<comment type="function">
    <text evidence="1">Involved in chemotaxis. Part of a chemotaxis signal transduction system that modulates chemotaxis in response to various stimuli. Catalyzes the demethylation of specific methylglutamate residues introduced into the chemoreceptors (methyl-accepting chemotaxis proteins or MCP) by CheR. Also mediates the irreversible deamidation of specific glutamine residues to glutamic acid.</text>
</comment>
<comment type="catalytic activity">
    <reaction evidence="1">
        <text>[protein]-L-glutamate 5-O-methyl ester + H2O = L-glutamyl-[protein] + methanol + H(+)</text>
        <dbReference type="Rhea" id="RHEA:23236"/>
        <dbReference type="Rhea" id="RHEA-COMP:10208"/>
        <dbReference type="Rhea" id="RHEA-COMP:10311"/>
        <dbReference type="ChEBI" id="CHEBI:15377"/>
        <dbReference type="ChEBI" id="CHEBI:15378"/>
        <dbReference type="ChEBI" id="CHEBI:17790"/>
        <dbReference type="ChEBI" id="CHEBI:29973"/>
        <dbReference type="ChEBI" id="CHEBI:82795"/>
        <dbReference type="EC" id="3.1.1.61"/>
    </reaction>
</comment>
<comment type="catalytic activity">
    <reaction evidence="1">
        <text>L-glutaminyl-[protein] + H2O = L-glutamyl-[protein] + NH4(+)</text>
        <dbReference type="Rhea" id="RHEA:16441"/>
        <dbReference type="Rhea" id="RHEA-COMP:10207"/>
        <dbReference type="Rhea" id="RHEA-COMP:10208"/>
        <dbReference type="ChEBI" id="CHEBI:15377"/>
        <dbReference type="ChEBI" id="CHEBI:28938"/>
        <dbReference type="ChEBI" id="CHEBI:29973"/>
        <dbReference type="ChEBI" id="CHEBI:30011"/>
        <dbReference type="EC" id="3.5.1.44"/>
    </reaction>
</comment>
<comment type="subcellular location">
    <subcellularLocation>
        <location evidence="1">Cytoplasm</location>
    </subcellularLocation>
</comment>
<comment type="domain">
    <text evidence="1">Contains a C-terminal catalytic domain, and an N-terminal region which modulates catalytic activity.</text>
</comment>
<comment type="PTM">
    <text evidence="1">Phosphorylated by CheA. Phosphorylation of the N-terminal regulatory domain activates the methylesterase activity.</text>
</comment>
<comment type="similarity">
    <text evidence="1">Belongs to the CheB family.</text>
</comment>
<keyword id="KW-0145">Chemotaxis</keyword>
<keyword id="KW-0963">Cytoplasm</keyword>
<keyword id="KW-0378">Hydrolase</keyword>
<keyword id="KW-0597">Phosphoprotein</keyword>
<keyword id="KW-1185">Reference proteome</keyword>
<proteinExistence type="inferred from homology"/>
<name>CHEB_CLOAB</name>
<feature type="chain" id="PRO_0000157989" description="Protein-glutamate methylesterase/protein-glutamine glutaminase">
    <location>
        <begin position="1"/>
        <end position="345"/>
    </location>
</feature>
<feature type="domain" description="Response regulatory" evidence="1">
    <location>
        <begin position="5"/>
        <end position="123"/>
    </location>
</feature>
<feature type="domain" description="CheB-type methylesterase" evidence="1">
    <location>
        <begin position="153"/>
        <end position="343"/>
    </location>
</feature>
<feature type="active site" evidence="1">
    <location>
        <position position="165"/>
    </location>
</feature>
<feature type="active site" evidence="1">
    <location>
        <position position="192"/>
    </location>
</feature>
<feature type="active site" evidence="1">
    <location>
        <position position="285"/>
    </location>
</feature>
<feature type="modified residue" description="4-aspartylphosphate" evidence="1">
    <location>
        <position position="56"/>
    </location>
</feature>
<gene>
    <name evidence="1" type="primary">cheB</name>
    <name type="ordered locus">CA_C2222</name>
</gene>
<organism>
    <name type="scientific">Clostridium acetobutylicum (strain ATCC 824 / DSM 792 / JCM 1419 / IAM 19013 / LMG 5710 / NBRC 13948 / NRRL B-527 / VKM B-1787 / 2291 / W)</name>
    <dbReference type="NCBI Taxonomy" id="272562"/>
    <lineage>
        <taxon>Bacteria</taxon>
        <taxon>Bacillati</taxon>
        <taxon>Bacillota</taxon>
        <taxon>Clostridia</taxon>
        <taxon>Eubacteriales</taxon>
        <taxon>Clostridiaceae</taxon>
        <taxon>Clostridium</taxon>
    </lineage>
</organism>